<keyword id="KW-0963">Cytoplasm</keyword>
<keyword id="KW-0269">Exonuclease</keyword>
<keyword id="KW-0378">Hydrolase</keyword>
<keyword id="KW-0540">Nuclease</keyword>
<gene>
    <name evidence="1" type="primary">xseA</name>
    <name type="ordered locus">AM1327</name>
</gene>
<feature type="chain" id="PRO_1000079971" description="Exodeoxyribonuclease 7 large subunit">
    <location>
        <begin position="1"/>
        <end position="397"/>
    </location>
</feature>
<comment type="function">
    <text evidence="1">Bidirectionally degrades single-stranded DNA into large acid-insoluble oligonucleotides, which are then degraded further into small acid-soluble oligonucleotides.</text>
</comment>
<comment type="catalytic activity">
    <reaction evidence="1">
        <text>Exonucleolytic cleavage in either 5'- to 3'- or 3'- to 5'-direction to yield nucleoside 5'-phosphates.</text>
        <dbReference type="EC" id="3.1.11.6"/>
    </reaction>
</comment>
<comment type="subunit">
    <text evidence="1">Heterooligomer composed of large and small subunits.</text>
</comment>
<comment type="subcellular location">
    <subcellularLocation>
        <location evidence="1">Cytoplasm</location>
    </subcellularLocation>
</comment>
<comment type="similarity">
    <text evidence="1">Belongs to the XseA family.</text>
</comment>
<protein>
    <recommendedName>
        <fullName evidence="1">Exodeoxyribonuclease 7 large subunit</fullName>
        <ecNumber evidence="1">3.1.11.6</ecNumber>
    </recommendedName>
    <alternativeName>
        <fullName evidence="1">Exodeoxyribonuclease VII large subunit</fullName>
        <shortName evidence="1">Exonuclease VII large subunit</shortName>
    </alternativeName>
</protein>
<sequence>MSLRSCSTEMIPEFTVTEITDLVRQVMHDTFYCIKIRGEISGLSRPSSGHVYLSLKDDNSVISAVCWNGTRLDVQFENGLEVICTGHLSTYQSRYQLVIEGMVLAGQGKLAAMLEERRKKLEKEGLFDQARKKPLPLLPLKIGVITSPTGAVIRDILNRVKHRFPSHIIVWPVQVQGSQASAMVVQAILGFNNLEEPPDVIIVARGGGSIEDLWPFNDEELARTTAASKIPIVSAIGHETDFTIIDYAADVRAPTPTAAVEIVLPERQQLVSDIAHKLSKIRSAVRNVLGAKEHRLLQLYGVLTETKHKISEVGRSALAHQEKIEFLFKVALLKKQQYLDNLIGRIDRYNKEHIISVGYAVIYDNTGQHVSSANAVAPDDTIVIEWKDGKRRAAILT</sequence>
<evidence type="ECO:0000255" key="1">
    <source>
        <dbReference type="HAMAP-Rule" id="MF_00378"/>
    </source>
</evidence>
<dbReference type="EC" id="3.1.11.6" evidence="1"/>
<dbReference type="EMBL" id="CP000030">
    <property type="protein sequence ID" value="AAV87116.1"/>
    <property type="molecule type" value="Genomic_DNA"/>
</dbReference>
<dbReference type="RefSeq" id="WP_011114684.1">
    <property type="nucleotide sequence ID" value="NC_004842.2"/>
</dbReference>
<dbReference type="SMR" id="Q5P9B4"/>
<dbReference type="KEGG" id="ama:AM1327"/>
<dbReference type="HOGENOM" id="CLU_023625_2_0_5"/>
<dbReference type="GO" id="GO:0005737">
    <property type="term" value="C:cytoplasm"/>
    <property type="evidence" value="ECO:0007669"/>
    <property type="project" value="UniProtKB-SubCell"/>
</dbReference>
<dbReference type="GO" id="GO:0009318">
    <property type="term" value="C:exodeoxyribonuclease VII complex"/>
    <property type="evidence" value="ECO:0007669"/>
    <property type="project" value="InterPro"/>
</dbReference>
<dbReference type="GO" id="GO:0008855">
    <property type="term" value="F:exodeoxyribonuclease VII activity"/>
    <property type="evidence" value="ECO:0007669"/>
    <property type="project" value="UniProtKB-UniRule"/>
</dbReference>
<dbReference type="GO" id="GO:0003676">
    <property type="term" value="F:nucleic acid binding"/>
    <property type="evidence" value="ECO:0007669"/>
    <property type="project" value="InterPro"/>
</dbReference>
<dbReference type="GO" id="GO:0006308">
    <property type="term" value="P:DNA catabolic process"/>
    <property type="evidence" value="ECO:0007669"/>
    <property type="project" value="UniProtKB-UniRule"/>
</dbReference>
<dbReference type="CDD" id="cd04489">
    <property type="entry name" value="ExoVII_LU_OBF"/>
    <property type="match status" value="1"/>
</dbReference>
<dbReference type="HAMAP" id="MF_00378">
    <property type="entry name" value="Exonuc_7_L"/>
    <property type="match status" value="1"/>
</dbReference>
<dbReference type="InterPro" id="IPR003753">
    <property type="entry name" value="Exonuc_VII_L"/>
</dbReference>
<dbReference type="InterPro" id="IPR020579">
    <property type="entry name" value="Exonuc_VII_lsu_C"/>
</dbReference>
<dbReference type="InterPro" id="IPR025824">
    <property type="entry name" value="OB-fold_nuc-bd_dom"/>
</dbReference>
<dbReference type="NCBIfam" id="TIGR00237">
    <property type="entry name" value="xseA"/>
    <property type="match status" value="1"/>
</dbReference>
<dbReference type="PANTHER" id="PTHR30008">
    <property type="entry name" value="EXODEOXYRIBONUCLEASE 7 LARGE SUBUNIT"/>
    <property type="match status" value="1"/>
</dbReference>
<dbReference type="PANTHER" id="PTHR30008:SF0">
    <property type="entry name" value="EXODEOXYRIBONUCLEASE 7 LARGE SUBUNIT"/>
    <property type="match status" value="1"/>
</dbReference>
<dbReference type="Pfam" id="PF02601">
    <property type="entry name" value="Exonuc_VII_L"/>
    <property type="match status" value="1"/>
</dbReference>
<dbReference type="Pfam" id="PF13742">
    <property type="entry name" value="tRNA_anti_2"/>
    <property type="match status" value="1"/>
</dbReference>
<name>EX7L_ANAMM</name>
<proteinExistence type="inferred from homology"/>
<organism>
    <name type="scientific">Anaplasma marginale (strain St. Maries)</name>
    <dbReference type="NCBI Taxonomy" id="234826"/>
    <lineage>
        <taxon>Bacteria</taxon>
        <taxon>Pseudomonadati</taxon>
        <taxon>Pseudomonadota</taxon>
        <taxon>Alphaproteobacteria</taxon>
        <taxon>Rickettsiales</taxon>
        <taxon>Anaplasmataceae</taxon>
        <taxon>Anaplasma</taxon>
    </lineage>
</organism>
<accession>Q5P9B4</accession>
<reference key="1">
    <citation type="journal article" date="2005" name="Proc. Natl. Acad. Sci. U.S.A.">
        <title>Complete genome sequencing of Anaplasma marginale reveals that the surface is skewed to two superfamilies of outer membrane proteins.</title>
        <authorList>
            <person name="Brayton K.A."/>
            <person name="Kappmeyer L.S."/>
            <person name="Herndon D.R."/>
            <person name="Dark M.J."/>
            <person name="Tibbals D.L."/>
            <person name="Palmer G.H."/>
            <person name="McGuire T.C."/>
            <person name="Knowles D.P. Jr."/>
        </authorList>
    </citation>
    <scope>NUCLEOTIDE SEQUENCE [LARGE SCALE GENOMIC DNA]</scope>
    <source>
        <strain>St. Maries</strain>
    </source>
</reference>